<sequence length="386" mass="44329">MQVAAIFIDAEIEDQAQELRKFFKKLGAEISEDKSSKGIEDDLHKIIGVCDVCFKDPSLHTVEEIDAVLNSVVSIIVSIPLERGENLILAFCEKMTKAPDQKLAQVCLQSLWRLFSNLELTSPLRYHVYYHLVQVAKQVDQVKEVFTGVEQLKNQFTQCPPSNEQMQKLYRLLHDVLKDTNSELASKVMIELLGTYTAENASYAREDAMKCIVTALADPNTFLLDPLLSLKPVRFLEGELIHDLLSVFVSEKLPAYLQFYQNHKEFVNSQGLNHEQNIKKMRLLSFMQLAESNPEMTFAQLQDELQIGENDVEPFIIEVLKTKLVRARMDQKARKVHISSTMHRTFGRPQWQQLRDLLHAWKANLTLVQENMKSVAEAQIELTRKQ</sequence>
<accession>B0WTN3</accession>
<gene>
    <name type="ORF">CPIJ010525</name>
</gene>
<reference key="1">
    <citation type="submission" date="2007-03" db="EMBL/GenBank/DDBJ databases">
        <title>Annotation of Culex pipiens quinquefasciatus.</title>
        <authorList>
            <consortium name="The Broad Institute Genome Sequencing Platform"/>
            <person name="Atkinson P.W."/>
            <person name="Hemingway J."/>
            <person name="Christensen B.M."/>
            <person name="Higgs S."/>
            <person name="Kodira C.D."/>
            <person name="Hannick L.I."/>
            <person name="Megy K."/>
            <person name="O'Leary S.B."/>
            <person name="Pearson M."/>
            <person name="Haas B.J."/>
            <person name="Mauceli E."/>
            <person name="Wortman J.R."/>
            <person name="Lee N.H."/>
            <person name="Guigo R."/>
            <person name="Stanke M."/>
            <person name="Alvarado L."/>
            <person name="Amedeo P."/>
            <person name="Antoine C.H."/>
            <person name="Arensburger P."/>
            <person name="Bidwell S.L."/>
            <person name="Crawford M."/>
            <person name="Camaro F."/>
            <person name="Devon K."/>
            <person name="Engels R."/>
            <person name="Hammond M."/>
            <person name="Howarth C."/>
            <person name="Koehrsen M."/>
            <person name="Lawson D."/>
            <person name="Montgomery P."/>
            <person name="Nene V."/>
            <person name="Nusbaum C."/>
            <person name="Puiu D."/>
            <person name="Romero-Severson J."/>
            <person name="Severson D.W."/>
            <person name="Shumway M."/>
            <person name="Sisk P."/>
            <person name="Stolte C."/>
            <person name="Zeng Q."/>
            <person name="Eisenstadt E."/>
            <person name="Fraser-Liggett C.M."/>
            <person name="Strausberg R."/>
            <person name="Galagan J."/>
            <person name="Birren B."/>
            <person name="Collins F.H."/>
        </authorList>
    </citation>
    <scope>NUCLEOTIDE SEQUENCE [LARGE SCALE GENOMIC DNA]</scope>
    <source>
        <strain>JHB</strain>
    </source>
</reference>
<proteinExistence type="inferred from homology"/>
<dbReference type="EMBL" id="DS232090">
    <property type="protein sequence ID" value="EDS34491.1"/>
    <property type="molecule type" value="Genomic_DNA"/>
</dbReference>
<dbReference type="SMR" id="B0WTN3"/>
<dbReference type="FunCoup" id="B0WTN3">
    <property type="interactions" value="2253"/>
</dbReference>
<dbReference type="STRING" id="7176.B0WTN3"/>
<dbReference type="EnsemblMetazoa" id="CPIJ010525-RA">
    <property type="protein sequence ID" value="CPIJ010525-PA"/>
    <property type="gene ID" value="CPIJ010525"/>
</dbReference>
<dbReference type="EnsemblMetazoa" id="CQUJHB012855.R19961">
    <property type="protein sequence ID" value="CQUJHB012855.P19961"/>
    <property type="gene ID" value="CQUJHB012855"/>
</dbReference>
<dbReference type="EnsemblMetazoa" id="XM_001855089.2">
    <property type="protein sequence ID" value="XP_001855135.1"/>
    <property type="gene ID" value="LOC6043043"/>
</dbReference>
<dbReference type="KEGG" id="cqu:CpipJ_CPIJ010525"/>
<dbReference type="CTD" id="10480"/>
<dbReference type="VEuPathDB" id="VectorBase:CPIJ010525"/>
<dbReference type="VEuPathDB" id="VectorBase:CQUJHB012855"/>
<dbReference type="eggNOG" id="KOG2753">
    <property type="taxonomic scope" value="Eukaryota"/>
</dbReference>
<dbReference type="HOGENOM" id="CLU_035254_1_0_1"/>
<dbReference type="InParanoid" id="B0WTN3"/>
<dbReference type="OMA" id="VCLKALW"/>
<dbReference type="OrthoDB" id="7900529at2759"/>
<dbReference type="PhylomeDB" id="B0WTN3"/>
<dbReference type="Proteomes" id="UP000002320">
    <property type="component" value="Unassembled WGS sequence"/>
</dbReference>
<dbReference type="GO" id="GO:0016282">
    <property type="term" value="C:eukaryotic 43S preinitiation complex"/>
    <property type="evidence" value="ECO:0007669"/>
    <property type="project" value="UniProtKB-UniRule"/>
</dbReference>
<dbReference type="GO" id="GO:0033290">
    <property type="term" value="C:eukaryotic 48S preinitiation complex"/>
    <property type="evidence" value="ECO:0007669"/>
    <property type="project" value="UniProtKB-UniRule"/>
</dbReference>
<dbReference type="GO" id="GO:0071541">
    <property type="term" value="C:eukaryotic translation initiation factor 3 complex, eIF3m"/>
    <property type="evidence" value="ECO:0007669"/>
    <property type="project" value="UniProtKB-UniRule"/>
</dbReference>
<dbReference type="GO" id="GO:0003743">
    <property type="term" value="F:translation initiation factor activity"/>
    <property type="evidence" value="ECO:0007669"/>
    <property type="project" value="UniProtKB-UniRule"/>
</dbReference>
<dbReference type="GO" id="GO:0001732">
    <property type="term" value="P:formation of cytoplasmic translation initiation complex"/>
    <property type="evidence" value="ECO:0007669"/>
    <property type="project" value="UniProtKB-UniRule"/>
</dbReference>
<dbReference type="HAMAP" id="MF_03012">
    <property type="entry name" value="eIF3m"/>
    <property type="match status" value="1"/>
</dbReference>
<dbReference type="InterPro" id="IPR016024">
    <property type="entry name" value="ARM-type_fold"/>
</dbReference>
<dbReference type="InterPro" id="IPR045237">
    <property type="entry name" value="COPS7/eIF3m"/>
</dbReference>
<dbReference type="InterPro" id="IPR027528">
    <property type="entry name" value="eIF3m"/>
</dbReference>
<dbReference type="InterPro" id="IPR040750">
    <property type="entry name" value="eIF3m_C_helix"/>
</dbReference>
<dbReference type="InterPro" id="IPR000717">
    <property type="entry name" value="PCI_dom"/>
</dbReference>
<dbReference type="PANTHER" id="PTHR15350">
    <property type="entry name" value="COP9 SIGNALOSOME COMPLEX SUBUNIT 7/DENDRITIC CELL PROTEIN GA17"/>
    <property type="match status" value="1"/>
</dbReference>
<dbReference type="PANTHER" id="PTHR15350:SF2">
    <property type="entry name" value="EUKARYOTIC TRANSLATION INITIATION FACTOR 3 SUBUNIT M"/>
    <property type="match status" value="1"/>
</dbReference>
<dbReference type="Pfam" id="PF18005">
    <property type="entry name" value="eIF3m_C_helix"/>
    <property type="match status" value="1"/>
</dbReference>
<dbReference type="Pfam" id="PF01399">
    <property type="entry name" value="PCI"/>
    <property type="match status" value="1"/>
</dbReference>
<dbReference type="SMART" id="SM00088">
    <property type="entry name" value="PINT"/>
    <property type="match status" value="1"/>
</dbReference>
<dbReference type="SUPFAM" id="SSF48371">
    <property type="entry name" value="ARM repeat"/>
    <property type="match status" value="1"/>
</dbReference>
<dbReference type="PROSITE" id="PS50250">
    <property type="entry name" value="PCI"/>
    <property type="match status" value="1"/>
</dbReference>
<keyword id="KW-0963">Cytoplasm</keyword>
<keyword id="KW-0396">Initiation factor</keyword>
<keyword id="KW-0648">Protein biosynthesis</keyword>
<keyword id="KW-1185">Reference proteome</keyword>
<name>EIF3M_CULQU</name>
<comment type="function">
    <text evidence="1">Component of the eukaryotic translation initiation factor 3 (eIF-3) complex, which is involved in protein synthesis of a specialized repertoire of mRNAs and, together with other initiation factors, stimulates binding of mRNA and methionyl-tRNAi to the 40S ribosome. The eIF-3 complex specifically targets and initiates translation of a subset of mRNAs involved in cell proliferation.</text>
</comment>
<comment type="subunit">
    <text evidence="1">Component of the eukaryotic translation initiation factor 3 (eIF-3) complex.</text>
</comment>
<comment type="subcellular location">
    <subcellularLocation>
        <location evidence="1">Cytoplasm</location>
    </subcellularLocation>
</comment>
<comment type="similarity">
    <text evidence="1">Belongs to the eIF-3 subunit M family.</text>
</comment>
<feature type="chain" id="PRO_0000365997" description="Eukaryotic translation initiation factor 3 subunit M">
    <location>
        <begin position="1"/>
        <end position="386"/>
    </location>
</feature>
<feature type="domain" description="PCI" evidence="2">
    <location>
        <begin position="181"/>
        <end position="343"/>
    </location>
</feature>
<protein>
    <recommendedName>
        <fullName evidence="1">Eukaryotic translation initiation factor 3 subunit M</fullName>
        <shortName evidence="1">eIF3m</shortName>
    </recommendedName>
</protein>
<organism>
    <name type="scientific">Culex quinquefasciatus</name>
    <name type="common">Southern house mosquito</name>
    <name type="synonym">Culex pungens</name>
    <dbReference type="NCBI Taxonomy" id="7176"/>
    <lineage>
        <taxon>Eukaryota</taxon>
        <taxon>Metazoa</taxon>
        <taxon>Ecdysozoa</taxon>
        <taxon>Arthropoda</taxon>
        <taxon>Hexapoda</taxon>
        <taxon>Insecta</taxon>
        <taxon>Pterygota</taxon>
        <taxon>Neoptera</taxon>
        <taxon>Endopterygota</taxon>
        <taxon>Diptera</taxon>
        <taxon>Nematocera</taxon>
        <taxon>Culicoidea</taxon>
        <taxon>Culicidae</taxon>
        <taxon>Culicinae</taxon>
        <taxon>Culicini</taxon>
        <taxon>Culex</taxon>
        <taxon>Culex</taxon>
    </lineage>
</organism>
<evidence type="ECO:0000255" key="1">
    <source>
        <dbReference type="HAMAP-Rule" id="MF_03012"/>
    </source>
</evidence>
<evidence type="ECO:0000255" key="2">
    <source>
        <dbReference type="PROSITE-ProRule" id="PRU01185"/>
    </source>
</evidence>